<gene>
    <name type="ordered locus">MG259</name>
</gene>
<sequence>MTLYEFFLNQKLVYQSSPHFNGVFLTILEHYGFQFKTIDKLWKSKLLITSELTDKIKQQLKCYFIEKIPLPYLLGTIQLRKLTFKTKKGVFIPRIDSLALIASVNLKKIKTALDLCCGSGTLAIALKKKCDTLDVYGSDIDIQALKLAQQNALINNVSINWIEADWFDCFNKIKTPIDLIVTNPPYLKKTQLNKTLNYEPKHSLVFQNKNSYFAYKQLFNLLLTKRSIKQLIFECSLFQKERLLNLFSIFKSRPIFNFQKQFIGMKVDNQKLPVVDIKNTKTIKQLLKMGLAGIVNTDTQMGLISYSESTLDKIKQRALNKHYVSMFGLEELKKLPKKLQQIASYFWPGSYTFIKNNKSYRVPKNLGLLNLFNAIGRVFCTSANISNQKPYTKLSDYQNDSYWIKQPCFIIRSTSKVQSNNTPSLVYNLDTKQLVRTTAKQTKQFHKLITKHQLAI</sequence>
<organism>
    <name type="scientific">Mycoplasma genitalium (strain ATCC 33530 / DSM 19775 / NCTC 10195 / G37)</name>
    <name type="common">Mycoplasmoides genitalium</name>
    <dbReference type="NCBI Taxonomy" id="243273"/>
    <lineage>
        <taxon>Bacteria</taxon>
        <taxon>Bacillati</taxon>
        <taxon>Mycoplasmatota</taxon>
        <taxon>Mycoplasmoidales</taxon>
        <taxon>Mycoplasmoidaceae</taxon>
        <taxon>Mycoplasmoides</taxon>
    </lineage>
</organism>
<reference key="1">
    <citation type="journal article" date="1995" name="Science">
        <title>The minimal gene complement of Mycoplasma genitalium.</title>
        <authorList>
            <person name="Fraser C.M."/>
            <person name="Gocayne J.D."/>
            <person name="White O."/>
            <person name="Adams M.D."/>
            <person name="Clayton R.A."/>
            <person name="Fleischmann R.D."/>
            <person name="Bult C.J."/>
            <person name="Kerlavage A.R."/>
            <person name="Sutton G.G."/>
            <person name="Kelley J.M."/>
            <person name="Fritchman J.L."/>
            <person name="Weidman J.F."/>
            <person name="Small K.V."/>
            <person name="Sandusky M."/>
            <person name="Fuhrmann J.L."/>
            <person name="Nguyen D.T."/>
            <person name="Utterback T.R."/>
            <person name="Saudek D.M."/>
            <person name="Phillips C.A."/>
            <person name="Merrick J.M."/>
            <person name="Tomb J.-F."/>
            <person name="Dougherty B.A."/>
            <person name="Bott K.F."/>
            <person name="Hu P.-C."/>
            <person name="Lucier T.S."/>
            <person name="Peterson S.N."/>
            <person name="Smith H.O."/>
            <person name="Hutchison C.A. III"/>
            <person name="Venter J.C."/>
        </authorList>
    </citation>
    <scope>NUCLEOTIDE SEQUENCE [LARGE SCALE GENOMIC DNA]</scope>
    <source>
        <strain>ATCC 33530 / DSM 19775 / NCTC 10195 / G37</strain>
    </source>
</reference>
<keyword id="KW-1185">Reference proteome</keyword>
<protein>
    <recommendedName>
        <fullName>Uncharacterized protein MG259</fullName>
    </recommendedName>
</protein>
<accession>Q49404</accession>
<evidence type="ECO:0000255" key="1">
    <source>
        <dbReference type="PROSITE-ProRule" id="PRU00518"/>
    </source>
</evidence>
<name>Y259_MYCGE</name>
<proteinExistence type="predicted"/>
<dbReference type="EMBL" id="L43967">
    <property type="protein sequence ID" value="AAC71479.1"/>
    <property type="molecule type" value="Genomic_DNA"/>
</dbReference>
<dbReference type="PIR" id="F64228">
    <property type="entry name" value="F64228"/>
</dbReference>
<dbReference type="RefSeq" id="WP_009885794.1">
    <property type="nucleotide sequence ID" value="NC_000908.2"/>
</dbReference>
<dbReference type="SMR" id="Q49404"/>
<dbReference type="STRING" id="243273.MG_259"/>
<dbReference type="GeneID" id="88282408"/>
<dbReference type="KEGG" id="mge:MG_259"/>
<dbReference type="eggNOG" id="COG0009">
    <property type="taxonomic scope" value="Bacteria"/>
</dbReference>
<dbReference type="eggNOG" id="COG2890">
    <property type="taxonomic scope" value="Bacteria"/>
</dbReference>
<dbReference type="HOGENOM" id="CLU_603857_0_0_14"/>
<dbReference type="InParanoid" id="Q49404"/>
<dbReference type="OrthoDB" id="9800643at2"/>
<dbReference type="BioCyc" id="MGEN243273:G1GJ2-309-MONOMER"/>
<dbReference type="Proteomes" id="UP000000807">
    <property type="component" value="Chromosome"/>
</dbReference>
<dbReference type="GO" id="GO:0003725">
    <property type="term" value="F:double-stranded RNA binding"/>
    <property type="evidence" value="ECO:0007669"/>
    <property type="project" value="InterPro"/>
</dbReference>
<dbReference type="GO" id="GO:0036009">
    <property type="term" value="F:protein-glutamine N-methyltransferase activity"/>
    <property type="evidence" value="ECO:0000318"/>
    <property type="project" value="GO_Central"/>
</dbReference>
<dbReference type="GO" id="GO:0032259">
    <property type="term" value="P:methylation"/>
    <property type="evidence" value="ECO:0007669"/>
    <property type="project" value="InterPro"/>
</dbReference>
<dbReference type="GO" id="GO:0006415">
    <property type="term" value="P:translational termination"/>
    <property type="evidence" value="ECO:0000318"/>
    <property type="project" value="GO_Central"/>
</dbReference>
<dbReference type="CDD" id="cd02440">
    <property type="entry name" value="AdoMet_MTases"/>
    <property type="match status" value="1"/>
</dbReference>
<dbReference type="Gene3D" id="3.90.870.10">
    <property type="entry name" value="DHBP synthase"/>
    <property type="match status" value="1"/>
</dbReference>
<dbReference type="Gene3D" id="3.40.50.150">
    <property type="entry name" value="Vaccinia Virus protein VP39"/>
    <property type="match status" value="1"/>
</dbReference>
<dbReference type="InterPro" id="IPR017945">
    <property type="entry name" value="DHBP_synth_RibB-like_a/b_dom"/>
</dbReference>
<dbReference type="InterPro" id="IPR002052">
    <property type="entry name" value="DNA_methylase_N6_adenine_CS"/>
</dbReference>
<dbReference type="InterPro" id="IPR050320">
    <property type="entry name" value="N5-glutamine_MTase"/>
</dbReference>
<dbReference type="InterPro" id="IPR029063">
    <property type="entry name" value="SAM-dependent_MTases_sf"/>
</dbReference>
<dbReference type="InterPro" id="IPR007848">
    <property type="entry name" value="Small_mtfrase_dom"/>
</dbReference>
<dbReference type="InterPro" id="IPR006070">
    <property type="entry name" value="Sua5-like_dom"/>
</dbReference>
<dbReference type="PANTHER" id="PTHR18895">
    <property type="entry name" value="HEMK METHYLTRANSFERASE"/>
    <property type="match status" value="1"/>
</dbReference>
<dbReference type="PANTHER" id="PTHR18895:SF74">
    <property type="entry name" value="MTRF1L RELEASE FACTOR GLUTAMINE METHYLTRANSFERASE"/>
    <property type="match status" value="1"/>
</dbReference>
<dbReference type="Pfam" id="PF05175">
    <property type="entry name" value="MTS"/>
    <property type="match status" value="1"/>
</dbReference>
<dbReference type="Pfam" id="PF01300">
    <property type="entry name" value="Sua5_yciO_yrdC"/>
    <property type="match status" value="1"/>
</dbReference>
<dbReference type="SUPFAM" id="SSF53335">
    <property type="entry name" value="S-adenosyl-L-methionine-dependent methyltransferases"/>
    <property type="match status" value="1"/>
</dbReference>
<dbReference type="SUPFAM" id="SSF55821">
    <property type="entry name" value="YrdC/RibB"/>
    <property type="match status" value="1"/>
</dbReference>
<dbReference type="PROSITE" id="PS00092">
    <property type="entry name" value="N6_MTASE"/>
    <property type="match status" value="1"/>
</dbReference>
<dbReference type="PROSITE" id="PS51163">
    <property type="entry name" value="YRDC"/>
    <property type="match status" value="1"/>
</dbReference>
<feature type="chain" id="PRO_0000202026" description="Uncharacterized protein MG259">
    <location>
        <begin position="1"/>
        <end position="456"/>
    </location>
</feature>
<feature type="domain" description="YrdC-like" evidence="1">
    <location>
        <begin position="277"/>
        <end position="440"/>
    </location>
</feature>